<accession>Q38YT6</accession>
<evidence type="ECO:0000255" key="1">
    <source>
        <dbReference type="HAMAP-Rule" id="MF_00165"/>
    </source>
</evidence>
<dbReference type="EC" id="2.7.4.9" evidence="1"/>
<dbReference type="EMBL" id="CR936503">
    <property type="protein sequence ID" value="CAI54641.1"/>
    <property type="molecule type" value="Genomic_DNA"/>
</dbReference>
<dbReference type="RefSeq" id="WP_011374049.1">
    <property type="nucleotide sequence ID" value="NC_007576.1"/>
</dbReference>
<dbReference type="SMR" id="Q38YT6"/>
<dbReference type="STRING" id="314315.LCA_0340"/>
<dbReference type="KEGG" id="lsa:LCA_0340"/>
<dbReference type="eggNOG" id="COG0125">
    <property type="taxonomic scope" value="Bacteria"/>
</dbReference>
<dbReference type="HOGENOM" id="CLU_049131_0_2_9"/>
<dbReference type="OrthoDB" id="9774907at2"/>
<dbReference type="Proteomes" id="UP000002707">
    <property type="component" value="Chromosome"/>
</dbReference>
<dbReference type="GO" id="GO:0005829">
    <property type="term" value="C:cytosol"/>
    <property type="evidence" value="ECO:0007669"/>
    <property type="project" value="TreeGrafter"/>
</dbReference>
<dbReference type="GO" id="GO:0005524">
    <property type="term" value="F:ATP binding"/>
    <property type="evidence" value="ECO:0007669"/>
    <property type="project" value="UniProtKB-UniRule"/>
</dbReference>
<dbReference type="GO" id="GO:0004798">
    <property type="term" value="F:dTMP kinase activity"/>
    <property type="evidence" value="ECO:0007669"/>
    <property type="project" value="UniProtKB-UniRule"/>
</dbReference>
<dbReference type="GO" id="GO:0006233">
    <property type="term" value="P:dTDP biosynthetic process"/>
    <property type="evidence" value="ECO:0007669"/>
    <property type="project" value="InterPro"/>
</dbReference>
<dbReference type="GO" id="GO:0006235">
    <property type="term" value="P:dTTP biosynthetic process"/>
    <property type="evidence" value="ECO:0007669"/>
    <property type="project" value="UniProtKB-UniRule"/>
</dbReference>
<dbReference type="GO" id="GO:0006227">
    <property type="term" value="P:dUDP biosynthetic process"/>
    <property type="evidence" value="ECO:0007669"/>
    <property type="project" value="TreeGrafter"/>
</dbReference>
<dbReference type="CDD" id="cd01672">
    <property type="entry name" value="TMPK"/>
    <property type="match status" value="1"/>
</dbReference>
<dbReference type="FunFam" id="3.40.50.300:FF:000225">
    <property type="entry name" value="Thymidylate kinase"/>
    <property type="match status" value="1"/>
</dbReference>
<dbReference type="Gene3D" id="3.40.50.300">
    <property type="entry name" value="P-loop containing nucleotide triphosphate hydrolases"/>
    <property type="match status" value="1"/>
</dbReference>
<dbReference type="HAMAP" id="MF_00165">
    <property type="entry name" value="Thymidylate_kinase"/>
    <property type="match status" value="1"/>
</dbReference>
<dbReference type="InterPro" id="IPR027417">
    <property type="entry name" value="P-loop_NTPase"/>
</dbReference>
<dbReference type="InterPro" id="IPR039430">
    <property type="entry name" value="Thymidylate_kin-like_dom"/>
</dbReference>
<dbReference type="InterPro" id="IPR018095">
    <property type="entry name" value="Thymidylate_kin_CS"/>
</dbReference>
<dbReference type="InterPro" id="IPR018094">
    <property type="entry name" value="Thymidylate_kinase"/>
</dbReference>
<dbReference type="NCBIfam" id="TIGR00041">
    <property type="entry name" value="DTMP_kinase"/>
    <property type="match status" value="1"/>
</dbReference>
<dbReference type="PANTHER" id="PTHR10344">
    <property type="entry name" value="THYMIDYLATE KINASE"/>
    <property type="match status" value="1"/>
</dbReference>
<dbReference type="PANTHER" id="PTHR10344:SF4">
    <property type="entry name" value="UMP-CMP KINASE 2, MITOCHONDRIAL"/>
    <property type="match status" value="1"/>
</dbReference>
<dbReference type="Pfam" id="PF02223">
    <property type="entry name" value="Thymidylate_kin"/>
    <property type="match status" value="1"/>
</dbReference>
<dbReference type="SUPFAM" id="SSF52540">
    <property type="entry name" value="P-loop containing nucleoside triphosphate hydrolases"/>
    <property type="match status" value="1"/>
</dbReference>
<dbReference type="PROSITE" id="PS01331">
    <property type="entry name" value="THYMIDYLATE_KINASE"/>
    <property type="match status" value="1"/>
</dbReference>
<name>KTHY_LATSS</name>
<reference key="1">
    <citation type="journal article" date="2005" name="Nat. Biotechnol.">
        <title>The complete genome sequence of the meat-borne lactic acid bacterium Lactobacillus sakei 23K.</title>
        <authorList>
            <person name="Chaillou S."/>
            <person name="Champomier-Verges M.-C."/>
            <person name="Cornet M."/>
            <person name="Crutz-Le Coq A.-M."/>
            <person name="Dudez A.-M."/>
            <person name="Martin V."/>
            <person name="Beaufils S."/>
            <person name="Darbon-Rongere E."/>
            <person name="Bossy R."/>
            <person name="Loux V."/>
            <person name="Zagorec M."/>
        </authorList>
    </citation>
    <scope>NUCLEOTIDE SEQUENCE [LARGE SCALE GENOMIC DNA]</scope>
    <source>
        <strain>23K</strain>
    </source>
</reference>
<comment type="function">
    <text evidence="1">Phosphorylation of dTMP to form dTDP in both de novo and salvage pathways of dTTP synthesis.</text>
</comment>
<comment type="catalytic activity">
    <reaction evidence="1">
        <text>dTMP + ATP = dTDP + ADP</text>
        <dbReference type="Rhea" id="RHEA:13517"/>
        <dbReference type="ChEBI" id="CHEBI:30616"/>
        <dbReference type="ChEBI" id="CHEBI:58369"/>
        <dbReference type="ChEBI" id="CHEBI:63528"/>
        <dbReference type="ChEBI" id="CHEBI:456216"/>
        <dbReference type="EC" id="2.7.4.9"/>
    </reaction>
</comment>
<comment type="similarity">
    <text evidence="1">Belongs to the thymidylate kinase family.</text>
</comment>
<protein>
    <recommendedName>
        <fullName evidence="1">Thymidylate kinase</fullName>
        <ecNumber evidence="1">2.7.4.9</ecNumber>
    </recommendedName>
    <alternativeName>
        <fullName evidence="1">dTMP kinase</fullName>
    </alternativeName>
</protein>
<gene>
    <name evidence="1" type="primary">tmk</name>
    <name type="ordered locus">LCA_0340</name>
</gene>
<sequence length="214" mass="23637">MVGKLITFEGPDGAGKTSALEAVVARLQKEVSQEIVVTREPGGNPISEQIRQIILDVKNTAMDDRTEALLYAAARRQHIVEKIQPALAADKLVICDRFVDSSIAYQGAGRGIGEEAVAQMNLFATDGLTPDLTLYLDVPSEVGLARIKQHRQNQYDRLDQEKLAFHQKVRQSYLKLAQAHPDRIKTIDASQPLEAVVTQCLQVIAQANLHLFEV</sequence>
<organism>
    <name type="scientific">Latilactobacillus sakei subsp. sakei (strain 23K)</name>
    <name type="common">Lactobacillus sakei subsp. sakei</name>
    <dbReference type="NCBI Taxonomy" id="314315"/>
    <lineage>
        <taxon>Bacteria</taxon>
        <taxon>Bacillati</taxon>
        <taxon>Bacillota</taxon>
        <taxon>Bacilli</taxon>
        <taxon>Lactobacillales</taxon>
        <taxon>Lactobacillaceae</taxon>
        <taxon>Latilactobacillus</taxon>
    </lineage>
</organism>
<feature type="chain" id="PRO_1000071560" description="Thymidylate kinase">
    <location>
        <begin position="1"/>
        <end position="214"/>
    </location>
</feature>
<feature type="binding site" evidence="1">
    <location>
        <begin position="10"/>
        <end position="17"/>
    </location>
    <ligand>
        <name>ATP</name>
        <dbReference type="ChEBI" id="CHEBI:30616"/>
    </ligand>
</feature>
<proteinExistence type="inferred from homology"/>
<keyword id="KW-0067">ATP-binding</keyword>
<keyword id="KW-0418">Kinase</keyword>
<keyword id="KW-0545">Nucleotide biosynthesis</keyword>
<keyword id="KW-0547">Nucleotide-binding</keyword>
<keyword id="KW-1185">Reference proteome</keyword>
<keyword id="KW-0808">Transferase</keyword>